<proteinExistence type="inferred from homology"/>
<keyword id="KW-0687">Ribonucleoprotein</keyword>
<keyword id="KW-0689">Ribosomal protein</keyword>
<keyword id="KW-0694">RNA-binding</keyword>
<keyword id="KW-0699">rRNA-binding</keyword>
<accession>A3NW34</accession>
<reference key="1">
    <citation type="journal article" date="2010" name="Genome Biol. Evol.">
        <title>Continuing evolution of Burkholderia mallei through genome reduction and large-scale rearrangements.</title>
        <authorList>
            <person name="Losada L."/>
            <person name="Ronning C.M."/>
            <person name="DeShazer D."/>
            <person name="Woods D."/>
            <person name="Fedorova N."/>
            <person name="Kim H.S."/>
            <person name="Shabalina S.A."/>
            <person name="Pearson T.R."/>
            <person name="Brinkac L."/>
            <person name="Tan P."/>
            <person name="Nandi T."/>
            <person name="Crabtree J."/>
            <person name="Badger J."/>
            <person name="Beckstrom-Sternberg S."/>
            <person name="Saqib M."/>
            <person name="Schutzer S.E."/>
            <person name="Keim P."/>
            <person name="Nierman W.C."/>
        </authorList>
    </citation>
    <scope>NUCLEOTIDE SEQUENCE [LARGE SCALE GENOMIC DNA]</scope>
    <source>
        <strain>1106a</strain>
    </source>
</reference>
<organism>
    <name type="scientific">Burkholderia pseudomallei (strain 1106a)</name>
    <dbReference type="NCBI Taxonomy" id="357348"/>
    <lineage>
        <taxon>Bacteria</taxon>
        <taxon>Pseudomonadati</taxon>
        <taxon>Pseudomonadota</taxon>
        <taxon>Betaproteobacteria</taxon>
        <taxon>Burkholderiales</taxon>
        <taxon>Burkholderiaceae</taxon>
        <taxon>Burkholderia</taxon>
        <taxon>pseudomallei group</taxon>
    </lineage>
</organism>
<evidence type="ECO:0000255" key="1">
    <source>
        <dbReference type="HAMAP-Rule" id="MF_00360"/>
    </source>
</evidence>
<evidence type="ECO:0000256" key="2">
    <source>
        <dbReference type="SAM" id="MobiDB-lite"/>
    </source>
</evidence>
<evidence type="ECO:0000305" key="3"/>
<sequence>MRHYEIVFIVHPDQSEQVPAMIERYKSTITSHGGQIHRVEDWGRRQLAYMIEKLAKAHYVCMNIECDQTTLDELEHAFKFNDAVLRHLIVKMKKAETGPSPMMKEVQREEAKKAAAAQPTEAQA</sequence>
<dbReference type="EMBL" id="CP000572">
    <property type="protein sequence ID" value="ABN90263.1"/>
    <property type="molecule type" value="Genomic_DNA"/>
</dbReference>
<dbReference type="RefSeq" id="WP_004193673.1">
    <property type="nucleotide sequence ID" value="NC_009076.1"/>
</dbReference>
<dbReference type="SMR" id="A3NW34"/>
<dbReference type="GeneID" id="93060533"/>
<dbReference type="KEGG" id="bpl:BURPS1106A_2291"/>
<dbReference type="HOGENOM" id="CLU_113441_6_1_4"/>
<dbReference type="Proteomes" id="UP000006738">
    <property type="component" value="Chromosome I"/>
</dbReference>
<dbReference type="GO" id="GO:0022627">
    <property type="term" value="C:cytosolic small ribosomal subunit"/>
    <property type="evidence" value="ECO:0007669"/>
    <property type="project" value="TreeGrafter"/>
</dbReference>
<dbReference type="GO" id="GO:0070181">
    <property type="term" value="F:small ribosomal subunit rRNA binding"/>
    <property type="evidence" value="ECO:0007669"/>
    <property type="project" value="TreeGrafter"/>
</dbReference>
<dbReference type="GO" id="GO:0003735">
    <property type="term" value="F:structural constituent of ribosome"/>
    <property type="evidence" value="ECO:0007669"/>
    <property type="project" value="InterPro"/>
</dbReference>
<dbReference type="GO" id="GO:0006412">
    <property type="term" value="P:translation"/>
    <property type="evidence" value="ECO:0007669"/>
    <property type="project" value="UniProtKB-UniRule"/>
</dbReference>
<dbReference type="CDD" id="cd00473">
    <property type="entry name" value="bS6"/>
    <property type="match status" value="1"/>
</dbReference>
<dbReference type="Gene3D" id="3.30.70.60">
    <property type="match status" value="1"/>
</dbReference>
<dbReference type="HAMAP" id="MF_00360">
    <property type="entry name" value="Ribosomal_bS6"/>
    <property type="match status" value="1"/>
</dbReference>
<dbReference type="InterPro" id="IPR000529">
    <property type="entry name" value="Ribosomal_bS6"/>
</dbReference>
<dbReference type="InterPro" id="IPR035980">
    <property type="entry name" value="Ribosomal_bS6_sf"/>
</dbReference>
<dbReference type="InterPro" id="IPR020814">
    <property type="entry name" value="Ribosomal_S6_plastid/chlpt"/>
</dbReference>
<dbReference type="InterPro" id="IPR014717">
    <property type="entry name" value="Transl_elong_EF1B/ribsomal_bS6"/>
</dbReference>
<dbReference type="NCBIfam" id="TIGR00166">
    <property type="entry name" value="S6"/>
    <property type="match status" value="1"/>
</dbReference>
<dbReference type="PANTHER" id="PTHR21011">
    <property type="entry name" value="MITOCHONDRIAL 28S RIBOSOMAL PROTEIN S6"/>
    <property type="match status" value="1"/>
</dbReference>
<dbReference type="PANTHER" id="PTHR21011:SF1">
    <property type="entry name" value="SMALL RIBOSOMAL SUBUNIT PROTEIN BS6M"/>
    <property type="match status" value="1"/>
</dbReference>
<dbReference type="Pfam" id="PF01250">
    <property type="entry name" value="Ribosomal_S6"/>
    <property type="match status" value="1"/>
</dbReference>
<dbReference type="SUPFAM" id="SSF54995">
    <property type="entry name" value="Ribosomal protein S6"/>
    <property type="match status" value="1"/>
</dbReference>
<name>RS6_BURP0</name>
<gene>
    <name evidence="1" type="primary">rpsF</name>
    <name type="ordered locus">BURPS1106A_2291</name>
</gene>
<comment type="function">
    <text evidence="1">Binds together with bS18 to 16S ribosomal RNA.</text>
</comment>
<comment type="similarity">
    <text evidence="1">Belongs to the bacterial ribosomal protein bS6 family.</text>
</comment>
<feature type="chain" id="PRO_1000005232" description="Small ribosomal subunit protein bS6">
    <location>
        <begin position="1"/>
        <end position="124"/>
    </location>
</feature>
<feature type="region of interest" description="Disordered" evidence="2">
    <location>
        <begin position="96"/>
        <end position="124"/>
    </location>
</feature>
<feature type="compositionally biased region" description="Low complexity" evidence="2">
    <location>
        <begin position="114"/>
        <end position="124"/>
    </location>
</feature>
<protein>
    <recommendedName>
        <fullName evidence="1">Small ribosomal subunit protein bS6</fullName>
    </recommendedName>
    <alternativeName>
        <fullName evidence="3">30S ribosomal protein S6</fullName>
    </alternativeName>
</protein>